<organism>
    <name type="scientific">Yersinia pestis</name>
    <dbReference type="NCBI Taxonomy" id="632"/>
    <lineage>
        <taxon>Bacteria</taxon>
        <taxon>Pseudomonadati</taxon>
        <taxon>Pseudomonadota</taxon>
        <taxon>Gammaproteobacteria</taxon>
        <taxon>Enterobacterales</taxon>
        <taxon>Yersiniaceae</taxon>
        <taxon>Yersinia</taxon>
    </lineage>
</organism>
<name>RL7_YERPE</name>
<reference key="1">
    <citation type="journal article" date="2001" name="Nature">
        <title>Genome sequence of Yersinia pestis, the causative agent of plague.</title>
        <authorList>
            <person name="Parkhill J."/>
            <person name="Wren B.W."/>
            <person name="Thomson N.R."/>
            <person name="Titball R.W."/>
            <person name="Holden M.T.G."/>
            <person name="Prentice M.B."/>
            <person name="Sebaihia M."/>
            <person name="James K.D."/>
            <person name="Churcher C.M."/>
            <person name="Mungall K.L."/>
            <person name="Baker S."/>
            <person name="Basham D."/>
            <person name="Bentley S.D."/>
            <person name="Brooks K."/>
            <person name="Cerdeno-Tarraga A.-M."/>
            <person name="Chillingworth T."/>
            <person name="Cronin A."/>
            <person name="Davies R.M."/>
            <person name="Davis P."/>
            <person name="Dougan G."/>
            <person name="Feltwell T."/>
            <person name="Hamlin N."/>
            <person name="Holroyd S."/>
            <person name="Jagels K."/>
            <person name="Karlyshev A.V."/>
            <person name="Leather S."/>
            <person name="Moule S."/>
            <person name="Oyston P.C.F."/>
            <person name="Quail M.A."/>
            <person name="Rutherford K.M."/>
            <person name="Simmonds M."/>
            <person name="Skelton J."/>
            <person name="Stevens K."/>
            <person name="Whitehead S."/>
            <person name="Barrell B.G."/>
        </authorList>
    </citation>
    <scope>NUCLEOTIDE SEQUENCE [LARGE SCALE GENOMIC DNA]</scope>
    <source>
        <strain>CO-92 / Biovar Orientalis</strain>
    </source>
</reference>
<reference key="2">
    <citation type="journal article" date="2002" name="J. Bacteriol.">
        <title>Genome sequence of Yersinia pestis KIM.</title>
        <authorList>
            <person name="Deng W."/>
            <person name="Burland V."/>
            <person name="Plunkett G. III"/>
            <person name="Boutin A."/>
            <person name="Mayhew G.F."/>
            <person name="Liss P."/>
            <person name="Perna N.T."/>
            <person name="Rose D.J."/>
            <person name="Mau B."/>
            <person name="Zhou S."/>
            <person name="Schwartz D.C."/>
            <person name="Fetherston J.D."/>
            <person name="Lindler L.E."/>
            <person name="Brubaker R.R."/>
            <person name="Plano G.V."/>
            <person name="Straley S.C."/>
            <person name="McDonough K.A."/>
            <person name="Nilles M.L."/>
            <person name="Matson J.S."/>
            <person name="Blattner F.R."/>
            <person name="Perry R.D."/>
        </authorList>
    </citation>
    <scope>NUCLEOTIDE SEQUENCE [LARGE SCALE GENOMIC DNA]</scope>
    <source>
        <strain>KIM10+ / Biovar Mediaevalis</strain>
    </source>
</reference>
<reference key="3">
    <citation type="journal article" date="2004" name="DNA Res.">
        <title>Complete genome sequence of Yersinia pestis strain 91001, an isolate avirulent to humans.</title>
        <authorList>
            <person name="Song Y."/>
            <person name="Tong Z."/>
            <person name="Wang J."/>
            <person name="Wang L."/>
            <person name="Guo Z."/>
            <person name="Han Y."/>
            <person name="Zhang J."/>
            <person name="Pei D."/>
            <person name="Zhou D."/>
            <person name="Qin H."/>
            <person name="Pang X."/>
            <person name="Han Y."/>
            <person name="Zhai J."/>
            <person name="Li M."/>
            <person name="Cui B."/>
            <person name="Qi Z."/>
            <person name="Jin L."/>
            <person name="Dai R."/>
            <person name="Chen F."/>
            <person name="Li S."/>
            <person name="Ye C."/>
            <person name="Du Z."/>
            <person name="Lin W."/>
            <person name="Wang J."/>
            <person name="Yu J."/>
            <person name="Yang H."/>
            <person name="Wang J."/>
            <person name="Huang P."/>
            <person name="Yang R."/>
        </authorList>
    </citation>
    <scope>NUCLEOTIDE SEQUENCE [LARGE SCALE GENOMIC DNA]</scope>
    <source>
        <strain>91001 / Biovar Mediaevalis</strain>
    </source>
</reference>
<sequence length="122" mass="12530">MSTITKDQILEGVAALSVMEIVELISAMEEKFGVSAAAVAAGPAAAVEAAEEQTEFDVVLASFGENKVAVIKAVRGATGLGLKEAKDLVESAPAVLKEGVNKDEAETLKKSLEEAGASVEIK</sequence>
<protein>
    <recommendedName>
        <fullName evidence="1">Large ribosomal subunit protein bL12</fullName>
    </recommendedName>
    <alternativeName>
        <fullName evidence="2">50S ribosomal protein L7/L12</fullName>
    </alternativeName>
</protein>
<proteinExistence type="inferred from homology"/>
<comment type="function">
    <text evidence="1">Forms part of the ribosomal stalk which helps the ribosome interact with GTP-bound translation factors. Is thus essential for accurate translation.</text>
</comment>
<comment type="subunit">
    <text evidence="1">Homodimer. Part of the ribosomal stalk of the 50S ribosomal subunit. Forms a multimeric L10(L12)X complex, where L10 forms an elongated spine to which 2 to 4 L12 dimers bind in a sequential fashion. Binds GTP-bound translation factors.</text>
</comment>
<comment type="similarity">
    <text evidence="1">Belongs to the bacterial ribosomal protein bL12 family.</text>
</comment>
<comment type="sequence caution" evidence="2">
    <conflict type="erroneous initiation">
        <sequence resource="EMBL-CDS" id="AAS63281"/>
    </conflict>
</comment>
<keyword id="KW-1185">Reference proteome</keyword>
<keyword id="KW-0687">Ribonucleoprotein</keyword>
<keyword id="KW-0689">Ribosomal protein</keyword>
<dbReference type="EMBL" id="AL590842">
    <property type="protein sequence ID" value="CAL22335.1"/>
    <property type="molecule type" value="Genomic_DNA"/>
</dbReference>
<dbReference type="EMBL" id="AE009952">
    <property type="protein sequence ID" value="AAM84072.1"/>
    <property type="molecule type" value="Genomic_DNA"/>
</dbReference>
<dbReference type="EMBL" id="AE017042">
    <property type="protein sequence ID" value="AAS63281.1"/>
    <property type="status" value="ALT_INIT"/>
    <property type="molecule type" value="Genomic_DNA"/>
</dbReference>
<dbReference type="PIR" id="AD0456">
    <property type="entry name" value="AD0456"/>
</dbReference>
<dbReference type="RefSeq" id="WP_002210675.1">
    <property type="nucleotide sequence ID" value="NZ_WUCM01000099.1"/>
</dbReference>
<dbReference type="RefSeq" id="YP_002348628.1">
    <property type="nucleotide sequence ID" value="NC_003143.1"/>
</dbReference>
<dbReference type="SMR" id="Q8ZAP4"/>
<dbReference type="STRING" id="214092.YPO3748"/>
<dbReference type="PaxDb" id="214092-YPO3748"/>
<dbReference type="DNASU" id="1145430"/>
<dbReference type="EnsemblBacteria" id="AAS63281">
    <property type="protein sequence ID" value="AAS63281"/>
    <property type="gene ID" value="YP_3111"/>
</dbReference>
<dbReference type="GeneID" id="96663775"/>
<dbReference type="KEGG" id="ype:YPO3748"/>
<dbReference type="KEGG" id="ypk:y0483"/>
<dbReference type="KEGG" id="ypm:YP_3111"/>
<dbReference type="PATRIC" id="fig|214092.21.peg.4266"/>
<dbReference type="eggNOG" id="COG0222">
    <property type="taxonomic scope" value="Bacteria"/>
</dbReference>
<dbReference type="HOGENOM" id="CLU_086499_3_2_6"/>
<dbReference type="OMA" id="LEDKWGV"/>
<dbReference type="OrthoDB" id="9811748at2"/>
<dbReference type="Proteomes" id="UP000000815">
    <property type="component" value="Chromosome"/>
</dbReference>
<dbReference type="Proteomes" id="UP000001019">
    <property type="component" value="Chromosome"/>
</dbReference>
<dbReference type="Proteomes" id="UP000002490">
    <property type="component" value="Chromosome"/>
</dbReference>
<dbReference type="GO" id="GO:0022625">
    <property type="term" value="C:cytosolic large ribosomal subunit"/>
    <property type="evidence" value="ECO:0000318"/>
    <property type="project" value="GO_Central"/>
</dbReference>
<dbReference type="GO" id="GO:0003729">
    <property type="term" value="F:mRNA binding"/>
    <property type="evidence" value="ECO:0000318"/>
    <property type="project" value="GO_Central"/>
</dbReference>
<dbReference type="GO" id="GO:0003735">
    <property type="term" value="F:structural constituent of ribosome"/>
    <property type="evidence" value="ECO:0000318"/>
    <property type="project" value="GO_Central"/>
</dbReference>
<dbReference type="GO" id="GO:0006412">
    <property type="term" value="P:translation"/>
    <property type="evidence" value="ECO:0000318"/>
    <property type="project" value="GO_Central"/>
</dbReference>
<dbReference type="CDD" id="cd00387">
    <property type="entry name" value="Ribosomal_L7_L12"/>
    <property type="match status" value="1"/>
</dbReference>
<dbReference type="FunFam" id="3.30.1390.10:FF:000001">
    <property type="entry name" value="50S ribosomal protein L7/L12"/>
    <property type="match status" value="1"/>
</dbReference>
<dbReference type="Gene3D" id="3.30.1390.10">
    <property type="match status" value="1"/>
</dbReference>
<dbReference type="Gene3D" id="1.20.5.710">
    <property type="entry name" value="Single helix bin"/>
    <property type="match status" value="1"/>
</dbReference>
<dbReference type="HAMAP" id="MF_00368">
    <property type="entry name" value="Ribosomal_bL12"/>
    <property type="match status" value="1"/>
</dbReference>
<dbReference type="InterPro" id="IPR000206">
    <property type="entry name" value="Ribosomal_bL12"/>
</dbReference>
<dbReference type="InterPro" id="IPR013823">
    <property type="entry name" value="Ribosomal_bL12_C"/>
</dbReference>
<dbReference type="InterPro" id="IPR014719">
    <property type="entry name" value="Ribosomal_bL12_C/ClpS-like"/>
</dbReference>
<dbReference type="InterPro" id="IPR008932">
    <property type="entry name" value="Ribosomal_bL12_oligo"/>
</dbReference>
<dbReference type="InterPro" id="IPR036235">
    <property type="entry name" value="Ribosomal_bL12_oligo_N_sf"/>
</dbReference>
<dbReference type="NCBIfam" id="TIGR00855">
    <property type="entry name" value="L12"/>
    <property type="match status" value="1"/>
</dbReference>
<dbReference type="PANTHER" id="PTHR45987">
    <property type="entry name" value="39S RIBOSOMAL PROTEIN L12"/>
    <property type="match status" value="1"/>
</dbReference>
<dbReference type="PANTHER" id="PTHR45987:SF4">
    <property type="entry name" value="LARGE RIBOSOMAL SUBUNIT PROTEIN BL12M"/>
    <property type="match status" value="1"/>
</dbReference>
<dbReference type="Pfam" id="PF00542">
    <property type="entry name" value="Ribosomal_L12"/>
    <property type="match status" value="1"/>
</dbReference>
<dbReference type="Pfam" id="PF16320">
    <property type="entry name" value="Ribosomal_L12_N"/>
    <property type="match status" value="1"/>
</dbReference>
<dbReference type="SUPFAM" id="SSF54736">
    <property type="entry name" value="ClpS-like"/>
    <property type="match status" value="1"/>
</dbReference>
<dbReference type="SUPFAM" id="SSF48300">
    <property type="entry name" value="Ribosomal protein L7/12, oligomerisation (N-terminal) domain"/>
    <property type="match status" value="1"/>
</dbReference>
<accession>Q8ZAP4</accession>
<accession>Q0WAR0</accession>
<feature type="chain" id="PRO_0000157611" description="Large ribosomal subunit protein bL12">
    <location>
        <begin position="1"/>
        <end position="122"/>
    </location>
</feature>
<gene>
    <name evidence="1" type="primary">rplL</name>
    <name type="ordered locus">YPO3748</name>
    <name type="ordered locus">y0483</name>
    <name type="ordered locus">YP_3111</name>
</gene>
<evidence type="ECO:0000255" key="1">
    <source>
        <dbReference type="HAMAP-Rule" id="MF_00368"/>
    </source>
</evidence>
<evidence type="ECO:0000305" key="2"/>